<name>ERA_ECO55</name>
<proteinExistence type="inferred from homology"/>
<gene>
    <name evidence="1" type="primary">era</name>
    <name type="ordered locus">EC55989_2854</name>
</gene>
<protein>
    <recommendedName>
        <fullName evidence="1">GTPase Era</fullName>
    </recommendedName>
</protein>
<comment type="function">
    <text evidence="1">An essential GTPase that binds both GDP and GTP, with rapid nucleotide exchange. Plays a role in 16S rRNA processing and 30S ribosomal subunit biogenesis and possibly also in cell cycle regulation and energy metabolism.</text>
</comment>
<comment type="subunit">
    <text evidence="1">Monomer.</text>
</comment>
<comment type="subcellular location">
    <subcellularLocation>
        <location>Cytoplasm</location>
    </subcellularLocation>
    <subcellularLocation>
        <location evidence="1">Cell inner membrane</location>
        <topology evidence="1">Peripheral membrane protein</topology>
    </subcellularLocation>
</comment>
<comment type="similarity">
    <text evidence="1 2">Belongs to the TRAFAC class TrmE-Era-EngA-EngB-Septin-like GTPase superfamily. Era GTPase family.</text>
</comment>
<accession>B7LDF9</accession>
<reference key="1">
    <citation type="journal article" date="2009" name="PLoS Genet.">
        <title>Organised genome dynamics in the Escherichia coli species results in highly diverse adaptive paths.</title>
        <authorList>
            <person name="Touchon M."/>
            <person name="Hoede C."/>
            <person name="Tenaillon O."/>
            <person name="Barbe V."/>
            <person name="Baeriswyl S."/>
            <person name="Bidet P."/>
            <person name="Bingen E."/>
            <person name="Bonacorsi S."/>
            <person name="Bouchier C."/>
            <person name="Bouvet O."/>
            <person name="Calteau A."/>
            <person name="Chiapello H."/>
            <person name="Clermont O."/>
            <person name="Cruveiller S."/>
            <person name="Danchin A."/>
            <person name="Diard M."/>
            <person name="Dossat C."/>
            <person name="Karoui M.E."/>
            <person name="Frapy E."/>
            <person name="Garry L."/>
            <person name="Ghigo J.M."/>
            <person name="Gilles A.M."/>
            <person name="Johnson J."/>
            <person name="Le Bouguenec C."/>
            <person name="Lescat M."/>
            <person name="Mangenot S."/>
            <person name="Martinez-Jehanne V."/>
            <person name="Matic I."/>
            <person name="Nassif X."/>
            <person name="Oztas S."/>
            <person name="Petit M.A."/>
            <person name="Pichon C."/>
            <person name="Rouy Z."/>
            <person name="Ruf C.S."/>
            <person name="Schneider D."/>
            <person name="Tourret J."/>
            <person name="Vacherie B."/>
            <person name="Vallenet D."/>
            <person name="Medigue C."/>
            <person name="Rocha E.P.C."/>
            <person name="Denamur E."/>
        </authorList>
    </citation>
    <scope>NUCLEOTIDE SEQUENCE [LARGE SCALE GENOMIC DNA]</scope>
    <source>
        <strain>55989 / EAEC</strain>
    </source>
</reference>
<sequence>MSIDKSYCGFIAIVGRPNVGKSTLLNKLLGQKISITSRKAQTTRHRIVGIHTEGAYQAIYVDTPGLHMEEKRAINRLMNKAASSSIGDVELVIFVVEGTRWTPDDEMVLNKLRDGKAPVILAVNKVDNVQEKADLLPHLQFLASQMNFLDIVPISAETGLNVDTIAAIVRKHLPEATHHFPEDYITDRSQRFMASEIIREKLMRFLGAELPYSVTVEIERFVSNERGGYDINGLILVEREGQKKMVIGNKGAKIKTIGIEARKDMQEMFEAPVHLELWVKVKSGWADDERALRSLGYVDDL</sequence>
<evidence type="ECO:0000255" key="1">
    <source>
        <dbReference type="HAMAP-Rule" id="MF_00367"/>
    </source>
</evidence>
<evidence type="ECO:0000255" key="2">
    <source>
        <dbReference type="PROSITE-ProRule" id="PRU01050"/>
    </source>
</evidence>
<organism>
    <name type="scientific">Escherichia coli (strain 55989 / EAEC)</name>
    <dbReference type="NCBI Taxonomy" id="585055"/>
    <lineage>
        <taxon>Bacteria</taxon>
        <taxon>Pseudomonadati</taxon>
        <taxon>Pseudomonadota</taxon>
        <taxon>Gammaproteobacteria</taxon>
        <taxon>Enterobacterales</taxon>
        <taxon>Enterobacteriaceae</taxon>
        <taxon>Escherichia</taxon>
    </lineage>
</organism>
<keyword id="KW-0997">Cell inner membrane</keyword>
<keyword id="KW-1003">Cell membrane</keyword>
<keyword id="KW-0963">Cytoplasm</keyword>
<keyword id="KW-0342">GTP-binding</keyword>
<keyword id="KW-0472">Membrane</keyword>
<keyword id="KW-0547">Nucleotide-binding</keyword>
<keyword id="KW-1185">Reference proteome</keyword>
<keyword id="KW-0690">Ribosome biogenesis</keyword>
<keyword id="KW-0694">RNA-binding</keyword>
<keyword id="KW-0699">rRNA-binding</keyword>
<feature type="chain" id="PRO_1000189961" description="GTPase Era">
    <location>
        <begin position="1"/>
        <end position="301"/>
    </location>
</feature>
<feature type="domain" description="Era-type G" evidence="2">
    <location>
        <begin position="7"/>
        <end position="175"/>
    </location>
</feature>
<feature type="domain" description="KH type-2" evidence="1">
    <location>
        <begin position="206"/>
        <end position="283"/>
    </location>
</feature>
<feature type="region of interest" description="G1" evidence="2">
    <location>
        <begin position="15"/>
        <end position="22"/>
    </location>
</feature>
<feature type="region of interest" description="G2" evidence="2">
    <location>
        <begin position="41"/>
        <end position="45"/>
    </location>
</feature>
<feature type="region of interest" description="G3" evidence="2">
    <location>
        <begin position="62"/>
        <end position="65"/>
    </location>
</feature>
<feature type="region of interest" description="G4" evidence="2">
    <location>
        <begin position="124"/>
        <end position="127"/>
    </location>
</feature>
<feature type="region of interest" description="G5" evidence="2">
    <location>
        <begin position="154"/>
        <end position="156"/>
    </location>
</feature>
<feature type="binding site" evidence="1">
    <location>
        <begin position="15"/>
        <end position="22"/>
    </location>
    <ligand>
        <name>GTP</name>
        <dbReference type="ChEBI" id="CHEBI:37565"/>
    </ligand>
</feature>
<feature type="binding site" evidence="1">
    <location>
        <begin position="62"/>
        <end position="66"/>
    </location>
    <ligand>
        <name>GTP</name>
        <dbReference type="ChEBI" id="CHEBI:37565"/>
    </ligand>
</feature>
<feature type="binding site" evidence="1">
    <location>
        <begin position="124"/>
        <end position="127"/>
    </location>
    <ligand>
        <name>GTP</name>
        <dbReference type="ChEBI" id="CHEBI:37565"/>
    </ligand>
</feature>
<dbReference type="EMBL" id="CU928145">
    <property type="protein sequence ID" value="CAU98725.1"/>
    <property type="molecule type" value="Genomic_DNA"/>
</dbReference>
<dbReference type="RefSeq" id="WP_000020737.1">
    <property type="nucleotide sequence ID" value="NZ_CP028304.1"/>
</dbReference>
<dbReference type="SMR" id="B7LDF9"/>
<dbReference type="GeneID" id="93774525"/>
<dbReference type="KEGG" id="eck:EC55989_2854"/>
<dbReference type="HOGENOM" id="CLU_038009_1_2_6"/>
<dbReference type="Proteomes" id="UP000000746">
    <property type="component" value="Chromosome"/>
</dbReference>
<dbReference type="GO" id="GO:0005829">
    <property type="term" value="C:cytosol"/>
    <property type="evidence" value="ECO:0007669"/>
    <property type="project" value="TreeGrafter"/>
</dbReference>
<dbReference type="GO" id="GO:0005886">
    <property type="term" value="C:plasma membrane"/>
    <property type="evidence" value="ECO:0007669"/>
    <property type="project" value="UniProtKB-SubCell"/>
</dbReference>
<dbReference type="GO" id="GO:0005525">
    <property type="term" value="F:GTP binding"/>
    <property type="evidence" value="ECO:0007669"/>
    <property type="project" value="UniProtKB-UniRule"/>
</dbReference>
<dbReference type="GO" id="GO:0003924">
    <property type="term" value="F:GTPase activity"/>
    <property type="evidence" value="ECO:0007669"/>
    <property type="project" value="UniProtKB-UniRule"/>
</dbReference>
<dbReference type="GO" id="GO:0043024">
    <property type="term" value="F:ribosomal small subunit binding"/>
    <property type="evidence" value="ECO:0007669"/>
    <property type="project" value="TreeGrafter"/>
</dbReference>
<dbReference type="GO" id="GO:0070181">
    <property type="term" value="F:small ribosomal subunit rRNA binding"/>
    <property type="evidence" value="ECO:0007669"/>
    <property type="project" value="UniProtKB-UniRule"/>
</dbReference>
<dbReference type="GO" id="GO:0000028">
    <property type="term" value="P:ribosomal small subunit assembly"/>
    <property type="evidence" value="ECO:0007669"/>
    <property type="project" value="TreeGrafter"/>
</dbReference>
<dbReference type="CDD" id="cd04163">
    <property type="entry name" value="Era"/>
    <property type="match status" value="1"/>
</dbReference>
<dbReference type="CDD" id="cd22534">
    <property type="entry name" value="KH-II_Era"/>
    <property type="match status" value="1"/>
</dbReference>
<dbReference type="FunFam" id="3.30.300.20:FF:000003">
    <property type="entry name" value="GTPase Era"/>
    <property type="match status" value="1"/>
</dbReference>
<dbReference type="FunFam" id="3.40.50.300:FF:000094">
    <property type="entry name" value="GTPase Era"/>
    <property type="match status" value="1"/>
</dbReference>
<dbReference type="Gene3D" id="3.30.300.20">
    <property type="match status" value="1"/>
</dbReference>
<dbReference type="Gene3D" id="3.40.50.300">
    <property type="entry name" value="P-loop containing nucleotide triphosphate hydrolases"/>
    <property type="match status" value="1"/>
</dbReference>
<dbReference type="HAMAP" id="MF_00367">
    <property type="entry name" value="GTPase_Era"/>
    <property type="match status" value="1"/>
</dbReference>
<dbReference type="InterPro" id="IPR030388">
    <property type="entry name" value="G_ERA_dom"/>
</dbReference>
<dbReference type="InterPro" id="IPR006073">
    <property type="entry name" value="GTP-bd"/>
</dbReference>
<dbReference type="InterPro" id="IPR005662">
    <property type="entry name" value="GTPase_Era-like"/>
</dbReference>
<dbReference type="InterPro" id="IPR015946">
    <property type="entry name" value="KH_dom-like_a/b"/>
</dbReference>
<dbReference type="InterPro" id="IPR004044">
    <property type="entry name" value="KH_dom_type_2"/>
</dbReference>
<dbReference type="InterPro" id="IPR009019">
    <property type="entry name" value="KH_sf_prok-type"/>
</dbReference>
<dbReference type="InterPro" id="IPR027417">
    <property type="entry name" value="P-loop_NTPase"/>
</dbReference>
<dbReference type="InterPro" id="IPR005225">
    <property type="entry name" value="Small_GTP-bd"/>
</dbReference>
<dbReference type="NCBIfam" id="TIGR00436">
    <property type="entry name" value="era"/>
    <property type="match status" value="1"/>
</dbReference>
<dbReference type="NCBIfam" id="NF000908">
    <property type="entry name" value="PRK00089.1"/>
    <property type="match status" value="1"/>
</dbReference>
<dbReference type="NCBIfam" id="TIGR00231">
    <property type="entry name" value="small_GTP"/>
    <property type="match status" value="1"/>
</dbReference>
<dbReference type="PANTHER" id="PTHR42698">
    <property type="entry name" value="GTPASE ERA"/>
    <property type="match status" value="1"/>
</dbReference>
<dbReference type="PANTHER" id="PTHR42698:SF1">
    <property type="entry name" value="GTPASE ERA, MITOCHONDRIAL"/>
    <property type="match status" value="1"/>
</dbReference>
<dbReference type="Pfam" id="PF07650">
    <property type="entry name" value="KH_2"/>
    <property type="match status" value="1"/>
</dbReference>
<dbReference type="Pfam" id="PF01926">
    <property type="entry name" value="MMR_HSR1"/>
    <property type="match status" value="1"/>
</dbReference>
<dbReference type="SUPFAM" id="SSF52540">
    <property type="entry name" value="P-loop containing nucleoside triphosphate hydrolases"/>
    <property type="match status" value="1"/>
</dbReference>
<dbReference type="SUPFAM" id="SSF54814">
    <property type="entry name" value="Prokaryotic type KH domain (KH-domain type II)"/>
    <property type="match status" value="1"/>
</dbReference>
<dbReference type="PROSITE" id="PS51713">
    <property type="entry name" value="G_ERA"/>
    <property type="match status" value="1"/>
</dbReference>
<dbReference type="PROSITE" id="PS50823">
    <property type="entry name" value="KH_TYPE_2"/>
    <property type="match status" value="1"/>
</dbReference>